<feature type="chain" id="PRO_1000008411" description="Holo-[acyl-carrier-protein] synthase">
    <location>
        <begin position="1"/>
        <end position="122"/>
    </location>
</feature>
<feature type="binding site" evidence="1">
    <location>
        <position position="9"/>
    </location>
    <ligand>
        <name>Mg(2+)</name>
        <dbReference type="ChEBI" id="CHEBI:18420"/>
    </ligand>
</feature>
<feature type="binding site" evidence="1">
    <location>
        <position position="58"/>
    </location>
    <ligand>
        <name>Mg(2+)</name>
        <dbReference type="ChEBI" id="CHEBI:18420"/>
    </ligand>
</feature>
<proteinExistence type="inferred from homology"/>
<name>ACPS_CHLFF</name>
<accession>Q254H8</accession>
<evidence type="ECO:0000255" key="1">
    <source>
        <dbReference type="HAMAP-Rule" id="MF_00101"/>
    </source>
</evidence>
<protein>
    <recommendedName>
        <fullName evidence="1">Holo-[acyl-carrier-protein] synthase</fullName>
        <shortName evidence="1">Holo-ACP synthase</shortName>
        <ecNumber evidence="1">2.7.8.7</ecNumber>
    </recommendedName>
    <alternativeName>
        <fullName evidence="1">4'-phosphopantetheinyl transferase AcpS</fullName>
    </alternativeName>
</protein>
<comment type="function">
    <text evidence="1">Transfers the 4'-phosphopantetheine moiety from coenzyme A to a Ser of acyl-carrier-protein.</text>
</comment>
<comment type="catalytic activity">
    <reaction evidence="1">
        <text>apo-[ACP] + CoA = holo-[ACP] + adenosine 3',5'-bisphosphate + H(+)</text>
        <dbReference type="Rhea" id="RHEA:12068"/>
        <dbReference type="Rhea" id="RHEA-COMP:9685"/>
        <dbReference type="Rhea" id="RHEA-COMP:9690"/>
        <dbReference type="ChEBI" id="CHEBI:15378"/>
        <dbReference type="ChEBI" id="CHEBI:29999"/>
        <dbReference type="ChEBI" id="CHEBI:57287"/>
        <dbReference type="ChEBI" id="CHEBI:58343"/>
        <dbReference type="ChEBI" id="CHEBI:64479"/>
        <dbReference type="EC" id="2.7.8.7"/>
    </reaction>
</comment>
<comment type="cofactor">
    <cofactor evidence="1">
        <name>Mg(2+)</name>
        <dbReference type="ChEBI" id="CHEBI:18420"/>
    </cofactor>
</comment>
<comment type="subcellular location">
    <subcellularLocation>
        <location evidence="1">Cytoplasm</location>
    </subcellularLocation>
</comment>
<comment type="similarity">
    <text evidence="1">Belongs to the P-Pant transferase superfamily. AcpS family.</text>
</comment>
<sequence length="122" mass="13657">MQMAHIGTDIIEIARIRKAIETHNQRMLNKIFTKKEQEYCLRLTNPYPSFAARFAGKEAVAKALGTGIGKVIGWKDIEILTSPKQPKVHLPPRVYKELGISKVLLSISHSREYATAMAVALV</sequence>
<reference key="1">
    <citation type="journal article" date="2006" name="DNA Res.">
        <title>Genome sequence of the cat pathogen, Chlamydophila felis.</title>
        <authorList>
            <person name="Azuma Y."/>
            <person name="Hirakawa H."/>
            <person name="Yamashita A."/>
            <person name="Cai Y."/>
            <person name="Rahman M.A."/>
            <person name="Suzuki H."/>
            <person name="Mitaku S."/>
            <person name="Toh H."/>
            <person name="Goto S."/>
            <person name="Murakami T."/>
            <person name="Sugi K."/>
            <person name="Hayashi H."/>
            <person name="Fukushi H."/>
            <person name="Hattori M."/>
            <person name="Kuhara S."/>
            <person name="Shirai M."/>
        </authorList>
    </citation>
    <scope>NUCLEOTIDE SEQUENCE [LARGE SCALE GENOMIC DNA]</scope>
    <source>
        <strain>Fe/C-56</strain>
    </source>
</reference>
<keyword id="KW-0963">Cytoplasm</keyword>
<keyword id="KW-0275">Fatty acid biosynthesis</keyword>
<keyword id="KW-0276">Fatty acid metabolism</keyword>
<keyword id="KW-0444">Lipid biosynthesis</keyword>
<keyword id="KW-0443">Lipid metabolism</keyword>
<keyword id="KW-0460">Magnesium</keyword>
<keyword id="KW-0479">Metal-binding</keyword>
<keyword id="KW-0808">Transferase</keyword>
<organism>
    <name type="scientific">Chlamydia felis (strain Fe/C-56)</name>
    <name type="common">Chlamydophila felis</name>
    <dbReference type="NCBI Taxonomy" id="264202"/>
    <lineage>
        <taxon>Bacteria</taxon>
        <taxon>Pseudomonadati</taxon>
        <taxon>Chlamydiota</taxon>
        <taxon>Chlamydiia</taxon>
        <taxon>Chlamydiales</taxon>
        <taxon>Chlamydiaceae</taxon>
        <taxon>Chlamydia/Chlamydophila group</taxon>
        <taxon>Chlamydia</taxon>
    </lineage>
</organism>
<dbReference type="EC" id="2.7.8.7" evidence="1"/>
<dbReference type="EMBL" id="AP006861">
    <property type="protein sequence ID" value="BAE81310.1"/>
    <property type="molecule type" value="Genomic_DNA"/>
</dbReference>
<dbReference type="RefSeq" id="WP_011458090.1">
    <property type="nucleotide sequence ID" value="NC_007899.1"/>
</dbReference>
<dbReference type="SMR" id="Q254H8"/>
<dbReference type="STRING" id="264202.CF0538"/>
<dbReference type="KEGG" id="cfe:CF0538"/>
<dbReference type="eggNOG" id="COG0736">
    <property type="taxonomic scope" value="Bacteria"/>
</dbReference>
<dbReference type="HOGENOM" id="CLU_089696_0_2_0"/>
<dbReference type="OrthoDB" id="517356at2"/>
<dbReference type="Proteomes" id="UP000001260">
    <property type="component" value="Chromosome"/>
</dbReference>
<dbReference type="GO" id="GO:0005737">
    <property type="term" value="C:cytoplasm"/>
    <property type="evidence" value="ECO:0007669"/>
    <property type="project" value="UniProtKB-SubCell"/>
</dbReference>
<dbReference type="GO" id="GO:0008897">
    <property type="term" value="F:holo-[acyl-carrier-protein] synthase activity"/>
    <property type="evidence" value="ECO:0007669"/>
    <property type="project" value="UniProtKB-UniRule"/>
</dbReference>
<dbReference type="GO" id="GO:0000287">
    <property type="term" value="F:magnesium ion binding"/>
    <property type="evidence" value="ECO:0007669"/>
    <property type="project" value="UniProtKB-UniRule"/>
</dbReference>
<dbReference type="GO" id="GO:0006633">
    <property type="term" value="P:fatty acid biosynthetic process"/>
    <property type="evidence" value="ECO:0007669"/>
    <property type="project" value="UniProtKB-UniRule"/>
</dbReference>
<dbReference type="Gene3D" id="3.90.470.20">
    <property type="entry name" value="4'-phosphopantetheinyl transferase domain"/>
    <property type="match status" value="1"/>
</dbReference>
<dbReference type="HAMAP" id="MF_00101">
    <property type="entry name" value="AcpS"/>
    <property type="match status" value="1"/>
</dbReference>
<dbReference type="InterPro" id="IPR008278">
    <property type="entry name" value="4-PPantetheinyl_Trfase_dom"/>
</dbReference>
<dbReference type="InterPro" id="IPR037143">
    <property type="entry name" value="4-PPantetheinyl_Trfase_dom_sf"/>
</dbReference>
<dbReference type="InterPro" id="IPR002582">
    <property type="entry name" value="ACPS"/>
</dbReference>
<dbReference type="InterPro" id="IPR004568">
    <property type="entry name" value="Ppantetheine-prot_Trfase_dom"/>
</dbReference>
<dbReference type="NCBIfam" id="TIGR00516">
    <property type="entry name" value="acpS"/>
    <property type="match status" value="1"/>
</dbReference>
<dbReference type="NCBIfam" id="TIGR00556">
    <property type="entry name" value="pantethn_trn"/>
    <property type="match status" value="1"/>
</dbReference>
<dbReference type="Pfam" id="PF01648">
    <property type="entry name" value="ACPS"/>
    <property type="match status" value="1"/>
</dbReference>
<dbReference type="SUPFAM" id="SSF56214">
    <property type="entry name" value="4'-phosphopantetheinyl transferase"/>
    <property type="match status" value="1"/>
</dbReference>
<gene>
    <name evidence="1" type="primary">acpS</name>
    <name type="ordered locus">CF0538</name>
</gene>